<accession>A2RJQ3</accession>
<gene>
    <name evidence="1" type="primary">murD</name>
    <name type="ordered locus">llmg_0912</name>
</gene>
<sequence length="449" mass="49192">MKKITKFKDQKILVLGLARSGMAAALVLNELGAIVTVNDGKPFEENKEAQVLLEEGIKVITGSHPIDLLDEDFALMVKNPGIRYDNPMVERAEALKIPVITEVELAYLVSEAPIIGITGTNGKTTTTTLIADILNADGQSAKLSGNIGFPASEVAQKAQATDTLVMELSSFQLMGIDTFRPKIALITNLFSAHLDYHGSQEAYEAAKWRIQENMTADDFLILNFNQEKCRKLADKTKATVLAFSTKEKVSGAYVNEGKIYFKDEFIMEASELSLPGDHNLENALAAIVASKLRGAENEAIVEVLTSFAGVKHRLQYLGEIDGRKVYNDSKATNILATQKALSGFDNSKLWLLAGGLDRGNGFEDLEKDLEDLKGMVVFGQTADKLRLMAEKLNIPVFASQNVATALKEIMPQTQVGDTILLSPACASWDQYKTFEERGDLFIEAFESLK</sequence>
<comment type="function">
    <text evidence="1">Cell wall formation. Catalyzes the addition of glutamate to the nucleotide precursor UDP-N-acetylmuramoyl-L-alanine (UMA).</text>
</comment>
<comment type="catalytic activity">
    <reaction evidence="1">
        <text>UDP-N-acetyl-alpha-D-muramoyl-L-alanine + D-glutamate + ATP = UDP-N-acetyl-alpha-D-muramoyl-L-alanyl-D-glutamate + ADP + phosphate + H(+)</text>
        <dbReference type="Rhea" id="RHEA:16429"/>
        <dbReference type="ChEBI" id="CHEBI:15378"/>
        <dbReference type="ChEBI" id="CHEBI:29986"/>
        <dbReference type="ChEBI" id="CHEBI:30616"/>
        <dbReference type="ChEBI" id="CHEBI:43474"/>
        <dbReference type="ChEBI" id="CHEBI:83898"/>
        <dbReference type="ChEBI" id="CHEBI:83900"/>
        <dbReference type="ChEBI" id="CHEBI:456216"/>
        <dbReference type="EC" id="6.3.2.9"/>
    </reaction>
</comment>
<comment type="pathway">
    <text evidence="1">Cell wall biogenesis; peptidoglycan biosynthesis.</text>
</comment>
<comment type="subcellular location">
    <subcellularLocation>
        <location evidence="1">Cytoplasm</location>
    </subcellularLocation>
</comment>
<comment type="similarity">
    <text evidence="1">Belongs to the MurCDEF family.</text>
</comment>
<evidence type="ECO:0000255" key="1">
    <source>
        <dbReference type="HAMAP-Rule" id="MF_00639"/>
    </source>
</evidence>
<dbReference type="EC" id="6.3.2.9" evidence="1"/>
<dbReference type="EMBL" id="AM406671">
    <property type="protein sequence ID" value="CAL97506.1"/>
    <property type="molecule type" value="Genomic_DNA"/>
</dbReference>
<dbReference type="RefSeq" id="WP_011834864.1">
    <property type="nucleotide sequence ID" value="NC_009004.1"/>
</dbReference>
<dbReference type="SMR" id="A2RJQ3"/>
<dbReference type="STRING" id="416870.llmg_0912"/>
<dbReference type="KEGG" id="llm:llmg_0912"/>
<dbReference type="eggNOG" id="COG0771">
    <property type="taxonomic scope" value="Bacteria"/>
</dbReference>
<dbReference type="HOGENOM" id="CLU_032540_0_1_9"/>
<dbReference type="OrthoDB" id="9809796at2"/>
<dbReference type="PhylomeDB" id="A2RJQ3"/>
<dbReference type="UniPathway" id="UPA00219"/>
<dbReference type="Proteomes" id="UP000000364">
    <property type="component" value="Chromosome"/>
</dbReference>
<dbReference type="GO" id="GO:0005737">
    <property type="term" value="C:cytoplasm"/>
    <property type="evidence" value="ECO:0007669"/>
    <property type="project" value="UniProtKB-SubCell"/>
</dbReference>
<dbReference type="GO" id="GO:0005524">
    <property type="term" value="F:ATP binding"/>
    <property type="evidence" value="ECO:0007669"/>
    <property type="project" value="UniProtKB-UniRule"/>
</dbReference>
<dbReference type="GO" id="GO:0008764">
    <property type="term" value="F:UDP-N-acetylmuramoylalanine-D-glutamate ligase activity"/>
    <property type="evidence" value="ECO:0007669"/>
    <property type="project" value="UniProtKB-UniRule"/>
</dbReference>
<dbReference type="GO" id="GO:0051301">
    <property type="term" value="P:cell division"/>
    <property type="evidence" value="ECO:0007669"/>
    <property type="project" value="UniProtKB-KW"/>
</dbReference>
<dbReference type="GO" id="GO:0071555">
    <property type="term" value="P:cell wall organization"/>
    <property type="evidence" value="ECO:0007669"/>
    <property type="project" value="UniProtKB-KW"/>
</dbReference>
<dbReference type="GO" id="GO:0009252">
    <property type="term" value="P:peptidoglycan biosynthetic process"/>
    <property type="evidence" value="ECO:0007669"/>
    <property type="project" value="UniProtKB-UniRule"/>
</dbReference>
<dbReference type="GO" id="GO:0008360">
    <property type="term" value="P:regulation of cell shape"/>
    <property type="evidence" value="ECO:0007669"/>
    <property type="project" value="UniProtKB-KW"/>
</dbReference>
<dbReference type="Gene3D" id="3.90.190.20">
    <property type="entry name" value="Mur ligase, C-terminal domain"/>
    <property type="match status" value="1"/>
</dbReference>
<dbReference type="Gene3D" id="3.40.1190.10">
    <property type="entry name" value="Mur-like, catalytic domain"/>
    <property type="match status" value="1"/>
</dbReference>
<dbReference type="Gene3D" id="3.40.50.720">
    <property type="entry name" value="NAD(P)-binding Rossmann-like Domain"/>
    <property type="match status" value="1"/>
</dbReference>
<dbReference type="HAMAP" id="MF_00639">
    <property type="entry name" value="MurD"/>
    <property type="match status" value="1"/>
</dbReference>
<dbReference type="InterPro" id="IPR036565">
    <property type="entry name" value="Mur-like_cat_sf"/>
</dbReference>
<dbReference type="InterPro" id="IPR004101">
    <property type="entry name" value="Mur_ligase_C"/>
</dbReference>
<dbReference type="InterPro" id="IPR036615">
    <property type="entry name" value="Mur_ligase_C_dom_sf"/>
</dbReference>
<dbReference type="InterPro" id="IPR013221">
    <property type="entry name" value="Mur_ligase_cen"/>
</dbReference>
<dbReference type="InterPro" id="IPR005762">
    <property type="entry name" value="MurD"/>
</dbReference>
<dbReference type="NCBIfam" id="TIGR01087">
    <property type="entry name" value="murD"/>
    <property type="match status" value="1"/>
</dbReference>
<dbReference type="PANTHER" id="PTHR43692">
    <property type="entry name" value="UDP-N-ACETYLMURAMOYLALANINE--D-GLUTAMATE LIGASE"/>
    <property type="match status" value="1"/>
</dbReference>
<dbReference type="PANTHER" id="PTHR43692:SF1">
    <property type="entry name" value="UDP-N-ACETYLMURAMOYLALANINE--D-GLUTAMATE LIGASE"/>
    <property type="match status" value="1"/>
</dbReference>
<dbReference type="Pfam" id="PF02875">
    <property type="entry name" value="Mur_ligase_C"/>
    <property type="match status" value="1"/>
</dbReference>
<dbReference type="Pfam" id="PF08245">
    <property type="entry name" value="Mur_ligase_M"/>
    <property type="match status" value="1"/>
</dbReference>
<dbReference type="Pfam" id="PF21799">
    <property type="entry name" value="MurD-like_N"/>
    <property type="match status" value="1"/>
</dbReference>
<dbReference type="SUPFAM" id="SSF51984">
    <property type="entry name" value="MurCD N-terminal domain"/>
    <property type="match status" value="1"/>
</dbReference>
<dbReference type="SUPFAM" id="SSF53623">
    <property type="entry name" value="MurD-like peptide ligases, catalytic domain"/>
    <property type="match status" value="1"/>
</dbReference>
<dbReference type="SUPFAM" id="SSF53244">
    <property type="entry name" value="MurD-like peptide ligases, peptide-binding domain"/>
    <property type="match status" value="1"/>
</dbReference>
<keyword id="KW-0067">ATP-binding</keyword>
<keyword id="KW-0131">Cell cycle</keyword>
<keyword id="KW-0132">Cell division</keyword>
<keyword id="KW-0133">Cell shape</keyword>
<keyword id="KW-0961">Cell wall biogenesis/degradation</keyword>
<keyword id="KW-0963">Cytoplasm</keyword>
<keyword id="KW-0436">Ligase</keyword>
<keyword id="KW-0547">Nucleotide-binding</keyword>
<keyword id="KW-0573">Peptidoglycan synthesis</keyword>
<organism>
    <name type="scientific">Lactococcus lactis subsp. cremoris (strain MG1363)</name>
    <dbReference type="NCBI Taxonomy" id="416870"/>
    <lineage>
        <taxon>Bacteria</taxon>
        <taxon>Bacillati</taxon>
        <taxon>Bacillota</taxon>
        <taxon>Bacilli</taxon>
        <taxon>Lactobacillales</taxon>
        <taxon>Streptococcaceae</taxon>
        <taxon>Lactococcus</taxon>
        <taxon>Lactococcus cremoris subsp. cremoris</taxon>
    </lineage>
</organism>
<protein>
    <recommendedName>
        <fullName evidence="1">UDP-N-acetylmuramoylalanine--D-glutamate ligase</fullName>
        <ecNumber evidence="1">6.3.2.9</ecNumber>
    </recommendedName>
    <alternativeName>
        <fullName evidence="1">D-glutamic acid-adding enzyme</fullName>
    </alternativeName>
    <alternativeName>
        <fullName evidence="1">UDP-N-acetylmuramoyl-L-alanyl-D-glutamate synthetase</fullName>
    </alternativeName>
</protein>
<name>MURD_LACLM</name>
<proteinExistence type="inferred from homology"/>
<reference key="1">
    <citation type="journal article" date="2007" name="J. Bacteriol.">
        <title>The complete genome sequence of the lactic acid bacterial paradigm Lactococcus lactis subsp. cremoris MG1363.</title>
        <authorList>
            <person name="Wegmann U."/>
            <person name="O'Connell-Motherway M."/>
            <person name="Zomer A."/>
            <person name="Buist G."/>
            <person name="Shearman C."/>
            <person name="Canchaya C."/>
            <person name="Ventura M."/>
            <person name="Goesmann A."/>
            <person name="Gasson M.J."/>
            <person name="Kuipers O.P."/>
            <person name="van Sinderen D."/>
            <person name="Kok J."/>
        </authorList>
    </citation>
    <scope>NUCLEOTIDE SEQUENCE [LARGE SCALE GENOMIC DNA]</scope>
    <source>
        <strain>MG1363</strain>
    </source>
</reference>
<feature type="chain" id="PRO_0000301432" description="UDP-N-acetylmuramoylalanine--D-glutamate ligase">
    <location>
        <begin position="1"/>
        <end position="449"/>
    </location>
</feature>
<feature type="binding site" evidence="1">
    <location>
        <begin position="119"/>
        <end position="125"/>
    </location>
    <ligand>
        <name>ATP</name>
        <dbReference type="ChEBI" id="CHEBI:30616"/>
    </ligand>
</feature>